<dbReference type="EC" id="5.4.3.8" evidence="1"/>
<dbReference type="EMBL" id="CP000471">
    <property type="protein sequence ID" value="ABK42622.1"/>
    <property type="molecule type" value="Genomic_DNA"/>
</dbReference>
<dbReference type="SMR" id="A0L3S9"/>
<dbReference type="STRING" id="156889.Mmc1_0093"/>
<dbReference type="KEGG" id="mgm:Mmc1_0093"/>
<dbReference type="eggNOG" id="COG0001">
    <property type="taxonomic scope" value="Bacteria"/>
</dbReference>
<dbReference type="HOGENOM" id="CLU_016922_1_5_5"/>
<dbReference type="OrthoDB" id="9801052at2"/>
<dbReference type="UniPathway" id="UPA00251">
    <property type="reaction ID" value="UER00317"/>
</dbReference>
<dbReference type="Proteomes" id="UP000002586">
    <property type="component" value="Chromosome"/>
</dbReference>
<dbReference type="GO" id="GO:0005737">
    <property type="term" value="C:cytoplasm"/>
    <property type="evidence" value="ECO:0007669"/>
    <property type="project" value="UniProtKB-SubCell"/>
</dbReference>
<dbReference type="GO" id="GO:0042286">
    <property type="term" value="F:glutamate-1-semialdehyde 2,1-aminomutase activity"/>
    <property type="evidence" value="ECO:0007669"/>
    <property type="project" value="UniProtKB-UniRule"/>
</dbReference>
<dbReference type="GO" id="GO:0030170">
    <property type="term" value="F:pyridoxal phosphate binding"/>
    <property type="evidence" value="ECO:0007669"/>
    <property type="project" value="InterPro"/>
</dbReference>
<dbReference type="GO" id="GO:0008483">
    <property type="term" value="F:transaminase activity"/>
    <property type="evidence" value="ECO:0007669"/>
    <property type="project" value="InterPro"/>
</dbReference>
<dbReference type="GO" id="GO:0006782">
    <property type="term" value="P:protoporphyrinogen IX biosynthetic process"/>
    <property type="evidence" value="ECO:0007669"/>
    <property type="project" value="UniProtKB-UniRule"/>
</dbReference>
<dbReference type="CDD" id="cd00610">
    <property type="entry name" value="OAT_like"/>
    <property type="match status" value="1"/>
</dbReference>
<dbReference type="FunFam" id="3.40.640.10:FF:000021">
    <property type="entry name" value="Glutamate-1-semialdehyde 2,1-aminomutase"/>
    <property type="match status" value="1"/>
</dbReference>
<dbReference type="Gene3D" id="3.90.1150.10">
    <property type="entry name" value="Aspartate Aminotransferase, domain 1"/>
    <property type="match status" value="1"/>
</dbReference>
<dbReference type="Gene3D" id="3.40.640.10">
    <property type="entry name" value="Type I PLP-dependent aspartate aminotransferase-like (Major domain)"/>
    <property type="match status" value="1"/>
</dbReference>
<dbReference type="HAMAP" id="MF_00375">
    <property type="entry name" value="HemL_aminotrans_3"/>
    <property type="match status" value="1"/>
</dbReference>
<dbReference type="InterPro" id="IPR004639">
    <property type="entry name" value="4pyrrol_synth_GluAld_NH2Trfase"/>
</dbReference>
<dbReference type="InterPro" id="IPR005814">
    <property type="entry name" value="Aminotrans_3"/>
</dbReference>
<dbReference type="InterPro" id="IPR049704">
    <property type="entry name" value="Aminotrans_3_PPA_site"/>
</dbReference>
<dbReference type="InterPro" id="IPR015424">
    <property type="entry name" value="PyrdxlP-dep_Trfase"/>
</dbReference>
<dbReference type="InterPro" id="IPR015421">
    <property type="entry name" value="PyrdxlP-dep_Trfase_major"/>
</dbReference>
<dbReference type="InterPro" id="IPR015422">
    <property type="entry name" value="PyrdxlP-dep_Trfase_small"/>
</dbReference>
<dbReference type="NCBIfam" id="TIGR00713">
    <property type="entry name" value="hemL"/>
    <property type="match status" value="1"/>
</dbReference>
<dbReference type="NCBIfam" id="NF000818">
    <property type="entry name" value="PRK00062.1"/>
    <property type="match status" value="1"/>
</dbReference>
<dbReference type="PANTHER" id="PTHR43713">
    <property type="entry name" value="GLUTAMATE-1-SEMIALDEHYDE 2,1-AMINOMUTASE"/>
    <property type="match status" value="1"/>
</dbReference>
<dbReference type="PANTHER" id="PTHR43713:SF3">
    <property type="entry name" value="GLUTAMATE-1-SEMIALDEHYDE 2,1-AMINOMUTASE 1, CHLOROPLASTIC-RELATED"/>
    <property type="match status" value="1"/>
</dbReference>
<dbReference type="Pfam" id="PF00202">
    <property type="entry name" value="Aminotran_3"/>
    <property type="match status" value="1"/>
</dbReference>
<dbReference type="SUPFAM" id="SSF53383">
    <property type="entry name" value="PLP-dependent transferases"/>
    <property type="match status" value="1"/>
</dbReference>
<dbReference type="PROSITE" id="PS00600">
    <property type="entry name" value="AA_TRANSFER_CLASS_3"/>
    <property type="match status" value="1"/>
</dbReference>
<proteinExistence type="inferred from homology"/>
<organism>
    <name type="scientific">Magnetococcus marinus (strain ATCC BAA-1437 / JCM 17883 / MC-1)</name>
    <dbReference type="NCBI Taxonomy" id="156889"/>
    <lineage>
        <taxon>Bacteria</taxon>
        <taxon>Pseudomonadati</taxon>
        <taxon>Pseudomonadota</taxon>
        <taxon>Alphaproteobacteria</taxon>
        <taxon>Magnetococcales</taxon>
        <taxon>Magnetococcaceae</taxon>
        <taxon>Magnetococcus</taxon>
    </lineage>
</organism>
<keyword id="KW-0963">Cytoplasm</keyword>
<keyword id="KW-0413">Isomerase</keyword>
<keyword id="KW-0627">Porphyrin biosynthesis</keyword>
<keyword id="KW-0663">Pyridoxal phosphate</keyword>
<keyword id="KW-1185">Reference proteome</keyword>
<comment type="catalytic activity">
    <reaction evidence="1">
        <text>(S)-4-amino-5-oxopentanoate = 5-aminolevulinate</text>
        <dbReference type="Rhea" id="RHEA:14265"/>
        <dbReference type="ChEBI" id="CHEBI:57501"/>
        <dbReference type="ChEBI" id="CHEBI:356416"/>
        <dbReference type="EC" id="5.4.3.8"/>
    </reaction>
</comment>
<comment type="cofactor">
    <cofactor evidence="1">
        <name>pyridoxal 5'-phosphate</name>
        <dbReference type="ChEBI" id="CHEBI:597326"/>
    </cofactor>
</comment>
<comment type="pathway">
    <text evidence="1">Porphyrin-containing compound metabolism; protoporphyrin-IX biosynthesis; 5-aminolevulinate from L-glutamyl-tRNA(Glu): step 2/2.</text>
</comment>
<comment type="subunit">
    <text evidence="1">Homodimer.</text>
</comment>
<comment type="subcellular location">
    <subcellularLocation>
        <location evidence="1">Cytoplasm</location>
    </subcellularLocation>
</comment>
<comment type="similarity">
    <text evidence="1">Belongs to the class-III pyridoxal-phosphate-dependent aminotransferase family. HemL subfamily.</text>
</comment>
<protein>
    <recommendedName>
        <fullName evidence="1">Glutamate-1-semialdehyde 2,1-aminomutase</fullName>
        <shortName evidence="1">GSA</shortName>
        <ecNumber evidence="1">5.4.3.8</ecNumber>
    </recommendedName>
    <alternativeName>
        <fullName evidence="1">Glutamate-1-semialdehyde aminotransferase</fullName>
        <shortName evidence="1">GSA-AT</shortName>
    </alternativeName>
</protein>
<sequence>MDQRGGTMSRSASLFQQAAGLIPGGVNSPVRAFKSVGGIPPFIREAAGAMMTDEDGKSYIDYVGSWGPMILGHAPKEVVAAIQQAAVRGCSFGAPTSNEILLAQKLIELVPSLEMVRLVNSGTEATMSALRLARAATGRDAILKFDGCYHGHADSLLVAAGSGLATFGVPSSPGVTRGTAKDTLTVPFNDLAAVEACFAQHPEGIAAVIVEPVAGNMGCVLPRPGYLKGLRDICTKYGTILIFDEVMTGFRVDLRCAQGFYDVTPDLTCLGKVIGGGLPVGAYGGKMELMNQVSPAGPVYQAGTLSGNPLATAAGLATLEAISQPGFYETLTSRTQRLTVGIGKALDEAGIPHVSYHIGSMFGLFFTDAREVYNFADAAKNDHNRFKDWFHCMLEEGVYFAPSPYEAGFVSIAHDEAIIDLTIEKARKVAKTL</sequence>
<evidence type="ECO:0000255" key="1">
    <source>
        <dbReference type="HAMAP-Rule" id="MF_00375"/>
    </source>
</evidence>
<name>GSA_MAGMM</name>
<gene>
    <name evidence="1" type="primary">hemL</name>
    <name type="ordered locus">Mmc1_0093</name>
</gene>
<reference key="1">
    <citation type="journal article" date="2009" name="Appl. Environ. Microbiol.">
        <title>Complete genome sequence of the chemolithoautotrophic marine magnetotactic coccus strain MC-1.</title>
        <authorList>
            <person name="Schubbe S."/>
            <person name="Williams T.J."/>
            <person name="Xie G."/>
            <person name="Kiss H.E."/>
            <person name="Brettin T.S."/>
            <person name="Martinez D."/>
            <person name="Ross C.A."/>
            <person name="Schuler D."/>
            <person name="Cox B.L."/>
            <person name="Nealson K.H."/>
            <person name="Bazylinski D.A."/>
        </authorList>
    </citation>
    <scope>NUCLEOTIDE SEQUENCE [LARGE SCALE GENOMIC DNA]</scope>
    <source>
        <strain>ATCC BAA-1437 / JCM 17883 / MC-1</strain>
    </source>
</reference>
<feature type="chain" id="PRO_0000382342" description="Glutamate-1-semialdehyde 2,1-aminomutase">
    <location>
        <begin position="1"/>
        <end position="433"/>
    </location>
</feature>
<feature type="modified residue" description="N6-(pyridoxal phosphate)lysine" evidence="1">
    <location>
        <position position="272"/>
    </location>
</feature>
<accession>A0L3S9</accession>